<keyword id="KW-0963">Cytoplasm</keyword>
<keyword id="KW-0521">NADP</keyword>
<keyword id="KW-0539">Nucleus</keyword>
<keyword id="KW-0560">Oxidoreductase</keyword>
<keyword id="KW-1185">Reference proteome</keyword>
<proteinExistence type="inferred from homology"/>
<reference key="1">
    <citation type="journal article" date="2002" name="Nature">
        <title>The genome sequence of Schizosaccharomyces pombe.</title>
        <authorList>
            <person name="Wood V."/>
            <person name="Gwilliam R."/>
            <person name="Rajandream M.A."/>
            <person name="Lyne M.H."/>
            <person name="Lyne R."/>
            <person name="Stewart A."/>
            <person name="Sgouros J.G."/>
            <person name="Peat N."/>
            <person name="Hayles J."/>
            <person name="Baker S.G."/>
            <person name="Basham D."/>
            <person name="Bowman S."/>
            <person name="Brooks K."/>
            <person name="Brown D."/>
            <person name="Brown S."/>
            <person name="Chillingworth T."/>
            <person name="Churcher C.M."/>
            <person name="Collins M."/>
            <person name="Connor R."/>
            <person name="Cronin A."/>
            <person name="Davis P."/>
            <person name="Feltwell T."/>
            <person name="Fraser A."/>
            <person name="Gentles S."/>
            <person name="Goble A."/>
            <person name="Hamlin N."/>
            <person name="Harris D.E."/>
            <person name="Hidalgo J."/>
            <person name="Hodgson G."/>
            <person name="Holroyd S."/>
            <person name="Hornsby T."/>
            <person name="Howarth S."/>
            <person name="Huckle E.J."/>
            <person name="Hunt S."/>
            <person name="Jagels K."/>
            <person name="James K.D."/>
            <person name="Jones L."/>
            <person name="Jones M."/>
            <person name="Leather S."/>
            <person name="McDonald S."/>
            <person name="McLean J."/>
            <person name="Mooney P."/>
            <person name="Moule S."/>
            <person name="Mungall K.L."/>
            <person name="Murphy L.D."/>
            <person name="Niblett D."/>
            <person name="Odell C."/>
            <person name="Oliver K."/>
            <person name="O'Neil S."/>
            <person name="Pearson D."/>
            <person name="Quail M.A."/>
            <person name="Rabbinowitsch E."/>
            <person name="Rutherford K.M."/>
            <person name="Rutter S."/>
            <person name="Saunders D."/>
            <person name="Seeger K."/>
            <person name="Sharp S."/>
            <person name="Skelton J."/>
            <person name="Simmonds M.N."/>
            <person name="Squares R."/>
            <person name="Squares S."/>
            <person name="Stevens K."/>
            <person name="Taylor K."/>
            <person name="Taylor R.G."/>
            <person name="Tivey A."/>
            <person name="Walsh S.V."/>
            <person name="Warren T."/>
            <person name="Whitehead S."/>
            <person name="Woodward J.R."/>
            <person name="Volckaert G."/>
            <person name="Aert R."/>
            <person name="Robben J."/>
            <person name="Grymonprez B."/>
            <person name="Weltjens I."/>
            <person name="Vanstreels E."/>
            <person name="Rieger M."/>
            <person name="Schaefer M."/>
            <person name="Mueller-Auer S."/>
            <person name="Gabel C."/>
            <person name="Fuchs M."/>
            <person name="Duesterhoeft A."/>
            <person name="Fritzc C."/>
            <person name="Holzer E."/>
            <person name="Moestl D."/>
            <person name="Hilbert H."/>
            <person name="Borzym K."/>
            <person name="Langer I."/>
            <person name="Beck A."/>
            <person name="Lehrach H."/>
            <person name="Reinhardt R."/>
            <person name="Pohl T.M."/>
            <person name="Eger P."/>
            <person name="Zimmermann W."/>
            <person name="Wedler H."/>
            <person name="Wambutt R."/>
            <person name="Purnelle B."/>
            <person name="Goffeau A."/>
            <person name="Cadieu E."/>
            <person name="Dreano S."/>
            <person name="Gloux S."/>
            <person name="Lelaure V."/>
            <person name="Mottier S."/>
            <person name="Galibert F."/>
            <person name="Aves S.J."/>
            <person name="Xiang Z."/>
            <person name="Hunt C."/>
            <person name="Moore K."/>
            <person name="Hurst S.M."/>
            <person name="Lucas M."/>
            <person name="Rochet M."/>
            <person name="Gaillardin C."/>
            <person name="Tallada V.A."/>
            <person name="Garzon A."/>
            <person name="Thode G."/>
            <person name="Daga R.R."/>
            <person name="Cruzado L."/>
            <person name="Jimenez J."/>
            <person name="Sanchez M."/>
            <person name="del Rey F."/>
            <person name="Benito J."/>
            <person name="Dominguez A."/>
            <person name="Revuelta J.L."/>
            <person name="Moreno S."/>
            <person name="Armstrong J."/>
            <person name="Forsburg S.L."/>
            <person name="Cerutti L."/>
            <person name="Lowe T."/>
            <person name="McCombie W.R."/>
            <person name="Paulsen I."/>
            <person name="Potashkin J."/>
            <person name="Shpakovski G.V."/>
            <person name="Ussery D."/>
            <person name="Barrell B.G."/>
            <person name="Nurse P."/>
        </authorList>
    </citation>
    <scope>NUCLEOTIDE SEQUENCE [LARGE SCALE GENOMIC DNA]</scope>
    <source>
        <strain>972 / ATCC 24843</strain>
    </source>
</reference>
<reference key="2">
    <citation type="journal article" date="2006" name="Nat. Biotechnol.">
        <title>ORFeome cloning and global analysis of protein localization in the fission yeast Schizosaccharomyces pombe.</title>
        <authorList>
            <person name="Matsuyama A."/>
            <person name="Arai R."/>
            <person name="Yashiroda Y."/>
            <person name="Shirai A."/>
            <person name="Kamata A."/>
            <person name="Sekido S."/>
            <person name="Kobayashi Y."/>
            <person name="Hashimoto A."/>
            <person name="Hamamoto M."/>
            <person name="Hiraoka Y."/>
            <person name="Horinouchi S."/>
            <person name="Yoshida M."/>
        </authorList>
    </citation>
    <scope>SUBCELLULAR LOCATION [LARGE SCALE ANALYSIS]</scope>
</reference>
<feature type="chain" id="PRO_0000374035" description="Uncharacterized oxidoreductase C1739.08c">
    <location>
        <begin position="1"/>
        <end position="261"/>
    </location>
</feature>
<feature type="active site" description="Proton donor" evidence="2">
    <location>
        <position position="157"/>
    </location>
</feature>
<feature type="active site" description="Proton acceptor" evidence="3">
    <location>
        <position position="172"/>
    </location>
</feature>
<feature type="active site" description="Lowers pKa of active site Tyr" evidence="2">
    <location>
        <position position="176"/>
    </location>
</feature>
<feature type="binding site" evidence="1">
    <location>
        <position position="33"/>
    </location>
    <ligand>
        <name>NADP(+)</name>
        <dbReference type="ChEBI" id="CHEBI:58349"/>
    </ligand>
</feature>
<feature type="binding site" evidence="1">
    <location>
        <position position="60"/>
    </location>
    <ligand>
        <name>NADP(+)</name>
        <dbReference type="ChEBI" id="CHEBI:58349"/>
    </ligand>
</feature>
<feature type="binding site" evidence="1">
    <location>
        <position position="78"/>
    </location>
    <ligand>
        <name>NADP(+)</name>
        <dbReference type="ChEBI" id="CHEBI:58349"/>
    </ligand>
</feature>
<feature type="binding site" evidence="2">
    <location>
        <position position="105"/>
    </location>
    <ligand>
        <name>NADP(+)</name>
        <dbReference type="ChEBI" id="CHEBI:58349"/>
    </ligand>
</feature>
<feature type="binding site" evidence="2">
    <location>
        <position position="172"/>
    </location>
    <ligand>
        <name>NADP(+)</name>
        <dbReference type="ChEBI" id="CHEBI:58349"/>
    </ligand>
</feature>
<feature type="binding site" evidence="2">
    <location>
        <position position="176"/>
    </location>
    <ligand>
        <name>NADP(+)</name>
        <dbReference type="ChEBI" id="CHEBI:58349"/>
    </ligand>
</feature>
<feature type="binding site" evidence="1">
    <location>
        <position position="206"/>
    </location>
    <ligand>
        <name>NADP(+)</name>
        <dbReference type="ChEBI" id="CHEBI:58349"/>
    </ligand>
</feature>
<dbReference type="EC" id="1.-.-.-"/>
<dbReference type="EMBL" id="CU329672">
    <property type="protein sequence ID" value="CAA20782.1"/>
    <property type="molecule type" value="Genomic_DNA"/>
</dbReference>
<dbReference type="PIR" id="T41116">
    <property type="entry name" value="T41116"/>
</dbReference>
<dbReference type="RefSeq" id="NP_588416.1">
    <property type="nucleotide sequence ID" value="NM_001023407.2"/>
</dbReference>
<dbReference type="SMR" id="O74470"/>
<dbReference type="BioGRID" id="275781">
    <property type="interactions" value="9"/>
</dbReference>
<dbReference type="FunCoup" id="O74470">
    <property type="interactions" value="49"/>
</dbReference>
<dbReference type="STRING" id="284812.O74470"/>
<dbReference type="iPTMnet" id="O74470"/>
<dbReference type="PaxDb" id="4896-SPCC1739.08c.1"/>
<dbReference type="EnsemblFungi" id="SPCC1739.08c.1">
    <property type="protein sequence ID" value="SPCC1739.08c.1:pep"/>
    <property type="gene ID" value="SPCC1739.08c"/>
</dbReference>
<dbReference type="KEGG" id="spo:2539211"/>
<dbReference type="PomBase" id="SPCC1739.08c"/>
<dbReference type="VEuPathDB" id="FungiDB:SPCC1739.08c"/>
<dbReference type="eggNOG" id="KOG0725">
    <property type="taxonomic scope" value="Eukaryota"/>
</dbReference>
<dbReference type="HOGENOM" id="CLU_010194_1_1_1"/>
<dbReference type="InParanoid" id="O74470"/>
<dbReference type="OMA" id="WEDGPFI"/>
<dbReference type="PhylomeDB" id="O74470"/>
<dbReference type="PRO" id="PR:O74470"/>
<dbReference type="Proteomes" id="UP000002485">
    <property type="component" value="Chromosome III"/>
</dbReference>
<dbReference type="GO" id="GO:0005829">
    <property type="term" value="C:cytosol"/>
    <property type="evidence" value="ECO:0007005"/>
    <property type="project" value="PomBase"/>
</dbReference>
<dbReference type="GO" id="GO:0005634">
    <property type="term" value="C:nucleus"/>
    <property type="evidence" value="ECO:0007005"/>
    <property type="project" value="PomBase"/>
</dbReference>
<dbReference type="GO" id="GO:0016616">
    <property type="term" value="F:oxidoreductase activity, acting on the CH-OH group of donors, NAD or NADP as acceptor"/>
    <property type="evidence" value="ECO:0000318"/>
    <property type="project" value="GO_Central"/>
</dbReference>
<dbReference type="CDD" id="cd05352">
    <property type="entry name" value="MDH-like_SDR_c"/>
    <property type="match status" value="1"/>
</dbReference>
<dbReference type="FunFam" id="3.40.50.720:FF:001497">
    <property type="entry name" value="Uncharacterized oxidoreductase C1739.08c"/>
    <property type="match status" value="1"/>
</dbReference>
<dbReference type="Gene3D" id="3.40.50.720">
    <property type="entry name" value="NAD(P)-binding Rossmann-like Domain"/>
    <property type="match status" value="1"/>
</dbReference>
<dbReference type="InterPro" id="IPR036291">
    <property type="entry name" value="NAD(P)-bd_dom_sf"/>
</dbReference>
<dbReference type="InterPro" id="IPR020904">
    <property type="entry name" value="Sc_DH/Rdtase_CS"/>
</dbReference>
<dbReference type="InterPro" id="IPR002347">
    <property type="entry name" value="SDR_fam"/>
</dbReference>
<dbReference type="PANTHER" id="PTHR43008">
    <property type="entry name" value="BENZIL REDUCTASE"/>
    <property type="match status" value="1"/>
</dbReference>
<dbReference type="PANTHER" id="PTHR43008:SF13">
    <property type="entry name" value="L-XYLULOSE REDUCTASE-RELATED"/>
    <property type="match status" value="1"/>
</dbReference>
<dbReference type="Pfam" id="PF13561">
    <property type="entry name" value="adh_short_C2"/>
    <property type="match status" value="1"/>
</dbReference>
<dbReference type="PRINTS" id="PR00081">
    <property type="entry name" value="GDHRDH"/>
</dbReference>
<dbReference type="PRINTS" id="PR00080">
    <property type="entry name" value="SDRFAMILY"/>
</dbReference>
<dbReference type="SUPFAM" id="SSF51735">
    <property type="entry name" value="NAD(P)-binding Rossmann-fold domains"/>
    <property type="match status" value="1"/>
</dbReference>
<dbReference type="PROSITE" id="PS00061">
    <property type="entry name" value="ADH_SHORT"/>
    <property type="match status" value="1"/>
</dbReference>
<sequence length="261" mass="28377">MSTPPANVTTAHVLDLFSLKGKNCVVFGAAKGIGFSIATAFAQAGGNVIITYLTTDPTEKAKKLAEETGVQVHTLKIDISRSDTVEAGVEEIQKIFKEIHVVVANAGMPFRRSVLDSPPHEFEKVMNINTNSVYRVAYYMGKIFKKQGFGNLIATASMSATIVNAPQHIAAYCASKAAVRQLCKALAVEWAEFARINSVSPGYFATDMPGYEFLKQWEPYVPFKRLGLTPELRGTYLYLASNASSFVTGLDLIVDGGYTCL</sequence>
<gene>
    <name type="ORF">SPCC1739.08c</name>
</gene>
<accession>O74470</accession>
<protein>
    <recommendedName>
        <fullName>Uncharacterized oxidoreductase C1739.08c</fullName>
        <ecNumber>1.-.-.-</ecNumber>
    </recommendedName>
</protein>
<evidence type="ECO:0000250" key="1">
    <source>
        <dbReference type="UniProtKB" id="L0E2Z4"/>
    </source>
</evidence>
<evidence type="ECO:0000250" key="2">
    <source>
        <dbReference type="UniProtKB" id="O93868"/>
    </source>
</evidence>
<evidence type="ECO:0000255" key="3">
    <source>
        <dbReference type="PROSITE-ProRule" id="PRU10001"/>
    </source>
</evidence>
<evidence type="ECO:0000269" key="4">
    <source>
    </source>
</evidence>
<evidence type="ECO:0000305" key="5"/>
<name>YQC8_SCHPO</name>
<comment type="subcellular location">
    <subcellularLocation>
        <location evidence="4">Cytoplasm</location>
    </subcellularLocation>
    <subcellularLocation>
        <location evidence="4">Nucleus</location>
    </subcellularLocation>
</comment>
<comment type="similarity">
    <text evidence="5">Belongs to the short-chain dehydrogenases/reductases (SDR) family.</text>
</comment>
<organism>
    <name type="scientific">Schizosaccharomyces pombe (strain 972 / ATCC 24843)</name>
    <name type="common">Fission yeast</name>
    <dbReference type="NCBI Taxonomy" id="284812"/>
    <lineage>
        <taxon>Eukaryota</taxon>
        <taxon>Fungi</taxon>
        <taxon>Dikarya</taxon>
        <taxon>Ascomycota</taxon>
        <taxon>Taphrinomycotina</taxon>
        <taxon>Schizosaccharomycetes</taxon>
        <taxon>Schizosaccharomycetales</taxon>
        <taxon>Schizosaccharomycetaceae</taxon>
        <taxon>Schizosaccharomyces</taxon>
    </lineage>
</organism>